<dbReference type="EC" id="7.6.2.-" evidence="1"/>
<dbReference type="EMBL" id="AF016580">
    <property type="protein sequence ID" value="AAB94549.1"/>
    <property type="molecule type" value="Genomic_DNA"/>
</dbReference>
<dbReference type="EMBL" id="AE003853">
    <property type="protein sequence ID" value="AAF96812.1"/>
    <property type="status" value="ALT_FRAME"/>
    <property type="molecule type" value="Genomic_DNA"/>
</dbReference>
<dbReference type="PIR" id="G82400">
    <property type="entry name" value="G82400"/>
</dbReference>
<dbReference type="RefSeq" id="WP_001193094.1">
    <property type="nucleotide sequence ID" value="NZ_LT906615.1"/>
</dbReference>
<dbReference type="SMR" id="Q9KL34"/>
<dbReference type="STRING" id="243277.VC_A0915"/>
<dbReference type="DNASU" id="2612894"/>
<dbReference type="EnsemblBacteria" id="AAF96812">
    <property type="protein sequence ID" value="AAF96812"/>
    <property type="gene ID" value="VC_A0915"/>
</dbReference>
<dbReference type="KEGG" id="vch:VC_A0915"/>
<dbReference type="eggNOG" id="COG4559">
    <property type="taxonomic scope" value="Bacteria"/>
</dbReference>
<dbReference type="HOGENOM" id="CLU_000604_1_11_6"/>
<dbReference type="Proteomes" id="UP000000584">
    <property type="component" value="Chromosome 2"/>
</dbReference>
<dbReference type="GO" id="GO:0005886">
    <property type="term" value="C:plasma membrane"/>
    <property type="evidence" value="ECO:0007669"/>
    <property type="project" value="UniProtKB-SubCell"/>
</dbReference>
<dbReference type="GO" id="GO:0005524">
    <property type="term" value="F:ATP binding"/>
    <property type="evidence" value="ECO:0007669"/>
    <property type="project" value="UniProtKB-KW"/>
</dbReference>
<dbReference type="GO" id="GO:0016887">
    <property type="term" value="F:ATP hydrolysis activity"/>
    <property type="evidence" value="ECO:0007669"/>
    <property type="project" value="InterPro"/>
</dbReference>
<dbReference type="CDD" id="cd03214">
    <property type="entry name" value="ABC_Iron-Siderophores_B12_Hemin"/>
    <property type="match status" value="1"/>
</dbReference>
<dbReference type="FunFam" id="3.40.50.300:FF:003042">
    <property type="entry name" value="Hemin import ATP-binding protein HmuV"/>
    <property type="match status" value="1"/>
</dbReference>
<dbReference type="Gene3D" id="3.40.50.300">
    <property type="entry name" value="P-loop containing nucleotide triphosphate hydrolases"/>
    <property type="match status" value="1"/>
</dbReference>
<dbReference type="InterPro" id="IPR003593">
    <property type="entry name" value="AAA+_ATPase"/>
</dbReference>
<dbReference type="InterPro" id="IPR003439">
    <property type="entry name" value="ABC_transporter-like_ATP-bd"/>
</dbReference>
<dbReference type="InterPro" id="IPR027417">
    <property type="entry name" value="P-loop_NTPase"/>
</dbReference>
<dbReference type="NCBIfam" id="NF010068">
    <property type="entry name" value="PRK13548.1"/>
    <property type="match status" value="1"/>
</dbReference>
<dbReference type="PANTHER" id="PTHR42794">
    <property type="entry name" value="HEMIN IMPORT ATP-BINDING PROTEIN HMUV"/>
    <property type="match status" value="1"/>
</dbReference>
<dbReference type="PANTHER" id="PTHR42794:SF1">
    <property type="entry name" value="HEMIN IMPORT ATP-BINDING PROTEIN HMUV"/>
    <property type="match status" value="1"/>
</dbReference>
<dbReference type="Pfam" id="PF00005">
    <property type="entry name" value="ABC_tran"/>
    <property type="match status" value="1"/>
</dbReference>
<dbReference type="SMART" id="SM00382">
    <property type="entry name" value="AAA"/>
    <property type="match status" value="1"/>
</dbReference>
<dbReference type="SUPFAM" id="SSF52540">
    <property type="entry name" value="P-loop containing nucleoside triphosphate hydrolases"/>
    <property type="match status" value="1"/>
</dbReference>
<dbReference type="PROSITE" id="PS50893">
    <property type="entry name" value="ABC_TRANSPORTER_2"/>
    <property type="match status" value="1"/>
</dbReference>
<dbReference type="PROSITE" id="PS51261">
    <property type="entry name" value="HMUV"/>
    <property type="match status" value="1"/>
</dbReference>
<accession>Q9KL34</accession>
<accession>O52047</accession>
<proteinExistence type="inferred from homology"/>
<protein>
    <recommendedName>
        <fullName evidence="1">Hemin import ATP-binding protein HmuV</fullName>
        <ecNumber evidence="1">7.6.2.-</ecNumber>
    </recommendedName>
</protein>
<comment type="function">
    <text evidence="1">Part of the ABC transporter complex HmuTUV involved in hemin import. Responsible for energy coupling to the transport system.</text>
</comment>
<comment type="subunit">
    <text evidence="1">The complex is composed of two ATP-binding proteins (HmuV), two transmembrane proteins (HmuU) and a solute-binding protein (HmuT).</text>
</comment>
<comment type="subcellular location">
    <subcellularLocation>
        <location evidence="1">Cell inner membrane</location>
        <topology evidence="1">Peripheral membrane protein</topology>
    </subcellularLocation>
</comment>
<comment type="similarity">
    <text evidence="1">Belongs to the ABC transporter superfamily. Heme (hemin) importer (TC 3.A.1.14.5) family.</text>
</comment>
<comment type="sequence caution" evidence="2">
    <conflict type="frameshift">
        <sequence resource="EMBL-CDS" id="AAF96812"/>
    </conflict>
</comment>
<gene>
    <name evidence="1" type="primary">hmuV</name>
    <name type="synonym">hutD</name>
    <name type="ordered locus">VC_A0915</name>
</gene>
<reference key="1">
    <citation type="submission" date="1997-07" db="EMBL/GenBank/DDBJ databases">
        <authorList>
            <person name="Occhino D.O."/>
            <person name="Payne S.M."/>
        </authorList>
    </citation>
    <scope>NUCLEOTIDE SEQUENCE [GENOMIC DNA]</scope>
    <source>
        <strain>Classical CA401</strain>
    </source>
</reference>
<reference key="2">
    <citation type="journal article" date="2000" name="Nature">
        <title>DNA sequence of both chromosomes of the cholera pathogen Vibrio cholerae.</title>
        <authorList>
            <person name="Heidelberg J.F."/>
            <person name="Eisen J.A."/>
            <person name="Nelson W.C."/>
            <person name="Clayton R.A."/>
            <person name="Gwinn M.L."/>
            <person name="Dodson R.J."/>
            <person name="Haft D.H."/>
            <person name="Hickey E.K."/>
            <person name="Peterson J.D."/>
            <person name="Umayam L.A."/>
            <person name="Gill S.R."/>
            <person name="Nelson K.E."/>
            <person name="Read T.D."/>
            <person name="Tettelin H."/>
            <person name="Richardson D.L."/>
            <person name="Ermolaeva M.D."/>
            <person name="Vamathevan J.J."/>
            <person name="Bass S."/>
            <person name="Qin H."/>
            <person name="Dragoi I."/>
            <person name="Sellers P."/>
            <person name="McDonald L.A."/>
            <person name="Utterback T.R."/>
            <person name="Fleischmann R.D."/>
            <person name="Nierman W.C."/>
            <person name="White O."/>
            <person name="Salzberg S.L."/>
            <person name="Smith H.O."/>
            <person name="Colwell R.R."/>
            <person name="Mekalanos J.J."/>
            <person name="Venter J.C."/>
            <person name="Fraser C.M."/>
        </authorList>
    </citation>
    <scope>NUCLEOTIDE SEQUENCE [LARGE SCALE GENOMIC DNA]</scope>
    <source>
        <strain>ATCC 39315 / El Tor Inaba N16961</strain>
    </source>
</reference>
<sequence length="259" mass="28419">MQTIAIQGRDLCVTYGSRQVLDHVDITLRCGEVAALLGPNGAGKSTLLKLLCGEMSGAGKLDYFGVPASQWPAEKLANHLGILPQQSSLTFPFTAQEVVELGAIPLNLPRKEVERVARHYMLKTDVLHLAASLYPSLSGGEKQRLHLARVLTQLHQAGQQRILMLDEPTSALDLAHQHNTLQLARQLADEEQCAVVVVLHDLNLAAQYSDRLILLHQGKIVCDAAPWQALTAERIEQVYGYQALVAAHPTRDFPMVYPA</sequence>
<evidence type="ECO:0000255" key="1">
    <source>
        <dbReference type="HAMAP-Rule" id="MF_01718"/>
    </source>
</evidence>
<evidence type="ECO:0000305" key="2"/>
<name>HMUV_VIBCH</name>
<keyword id="KW-0067">ATP-binding</keyword>
<keyword id="KW-0997">Cell inner membrane</keyword>
<keyword id="KW-1003">Cell membrane</keyword>
<keyword id="KW-0472">Membrane</keyword>
<keyword id="KW-0547">Nucleotide-binding</keyword>
<keyword id="KW-1185">Reference proteome</keyword>
<keyword id="KW-1278">Translocase</keyword>
<keyword id="KW-0813">Transport</keyword>
<feature type="chain" id="PRO_0000269634" description="Hemin import ATP-binding protein HmuV">
    <location>
        <begin position="1"/>
        <end position="259"/>
    </location>
</feature>
<feature type="domain" description="ABC transporter" evidence="1">
    <location>
        <begin position="6"/>
        <end position="242"/>
    </location>
</feature>
<feature type="binding site" evidence="1">
    <location>
        <begin position="38"/>
        <end position="45"/>
    </location>
    <ligand>
        <name>ATP</name>
        <dbReference type="ChEBI" id="CHEBI:30616"/>
    </ligand>
</feature>
<organism>
    <name type="scientific">Vibrio cholerae serotype O1 (strain ATCC 39315 / El Tor Inaba N16961)</name>
    <dbReference type="NCBI Taxonomy" id="243277"/>
    <lineage>
        <taxon>Bacteria</taxon>
        <taxon>Pseudomonadati</taxon>
        <taxon>Pseudomonadota</taxon>
        <taxon>Gammaproteobacteria</taxon>
        <taxon>Vibrionales</taxon>
        <taxon>Vibrionaceae</taxon>
        <taxon>Vibrio</taxon>
    </lineage>
</organism>